<evidence type="ECO:0000250" key="1">
    <source>
        <dbReference type="UniProtKB" id="O43614"/>
    </source>
</evidence>
<evidence type="ECO:0000255" key="2"/>
<evidence type="ECO:0000255" key="3">
    <source>
        <dbReference type="PROSITE-ProRule" id="PRU00521"/>
    </source>
</evidence>
<evidence type="ECO:0000269" key="4">
    <source>
    </source>
</evidence>
<organism>
    <name type="scientific">Rattus norvegicus</name>
    <name type="common">Rat</name>
    <dbReference type="NCBI Taxonomy" id="10116"/>
    <lineage>
        <taxon>Eukaryota</taxon>
        <taxon>Metazoa</taxon>
        <taxon>Chordata</taxon>
        <taxon>Craniata</taxon>
        <taxon>Vertebrata</taxon>
        <taxon>Euteleostomi</taxon>
        <taxon>Mammalia</taxon>
        <taxon>Eutheria</taxon>
        <taxon>Euarchontoglires</taxon>
        <taxon>Glires</taxon>
        <taxon>Rodentia</taxon>
        <taxon>Myomorpha</taxon>
        <taxon>Muroidea</taxon>
        <taxon>Muridae</taxon>
        <taxon>Murinae</taxon>
        <taxon>Rattus</taxon>
    </lineage>
</organism>
<dbReference type="EMBL" id="AF041246">
    <property type="protein sequence ID" value="AAC40042.1"/>
    <property type="molecule type" value="mRNA"/>
</dbReference>
<dbReference type="RefSeq" id="NP_037206.1">
    <property type="nucleotide sequence ID" value="NM_013074.2"/>
</dbReference>
<dbReference type="SMR" id="P56719"/>
<dbReference type="CORUM" id="P56719"/>
<dbReference type="FunCoup" id="P56719">
    <property type="interactions" value="118"/>
</dbReference>
<dbReference type="STRING" id="10116.ENSRNOP00000015824"/>
<dbReference type="BindingDB" id="P56719"/>
<dbReference type="ChEMBL" id="CHEMBL1275216"/>
<dbReference type="GuidetoPHARMACOLOGY" id="322"/>
<dbReference type="GlyCosmos" id="P56719">
    <property type="glycosylation" value="3 sites, No reported glycans"/>
</dbReference>
<dbReference type="GlyGen" id="P56719">
    <property type="glycosylation" value="3 sites"/>
</dbReference>
<dbReference type="PhosphoSitePlus" id="P56719"/>
<dbReference type="PaxDb" id="10116-ENSRNOP00000015824"/>
<dbReference type="Ensembl" id="ENSRNOT00000015824.5">
    <property type="protein sequence ID" value="ENSRNOP00000015824.4"/>
    <property type="gene ID" value="ENSRNOG00000011251.5"/>
</dbReference>
<dbReference type="GeneID" id="25605"/>
<dbReference type="KEGG" id="rno:25605"/>
<dbReference type="UCSC" id="RGD:2788">
    <property type="organism name" value="rat"/>
</dbReference>
<dbReference type="AGR" id="RGD:2788"/>
<dbReference type="CTD" id="3062"/>
<dbReference type="RGD" id="2788">
    <property type="gene designation" value="Hcrtr2"/>
</dbReference>
<dbReference type="eggNOG" id="KOG3656">
    <property type="taxonomic scope" value="Eukaryota"/>
</dbReference>
<dbReference type="GeneTree" id="ENSGT01130000278294"/>
<dbReference type="HOGENOM" id="CLU_009579_6_3_1"/>
<dbReference type="InParanoid" id="P56719"/>
<dbReference type="OMA" id="LHIPGMN"/>
<dbReference type="OrthoDB" id="9986530at2759"/>
<dbReference type="PhylomeDB" id="P56719"/>
<dbReference type="TreeFam" id="TF315303"/>
<dbReference type="Reactome" id="R-RNO-389397">
    <property type="pathway name" value="Orexin and neuropeptides FF and QRFP bind to their respective receptors"/>
</dbReference>
<dbReference type="Reactome" id="R-RNO-416476">
    <property type="pathway name" value="G alpha (q) signalling events"/>
</dbReference>
<dbReference type="PRO" id="PR:P56719"/>
<dbReference type="Proteomes" id="UP000002494">
    <property type="component" value="Chromosome 8"/>
</dbReference>
<dbReference type="Bgee" id="ENSRNOG00000011251">
    <property type="expression patterns" value="Expressed in cerebellum and 1 other cell type or tissue"/>
</dbReference>
<dbReference type="GO" id="GO:0005654">
    <property type="term" value="C:nucleoplasm"/>
    <property type="evidence" value="ECO:0007669"/>
    <property type="project" value="Ensembl"/>
</dbReference>
<dbReference type="GO" id="GO:0005886">
    <property type="term" value="C:plasma membrane"/>
    <property type="evidence" value="ECO:0000250"/>
    <property type="project" value="UniProtKB"/>
</dbReference>
<dbReference type="GO" id="GO:0004930">
    <property type="term" value="F:G protein-coupled receptor activity"/>
    <property type="evidence" value="ECO:0000314"/>
    <property type="project" value="RGD"/>
</dbReference>
<dbReference type="GO" id="GO:0016499">
    <property type="term" value="F:orexin receptor activity"/>
    <property type="evidence" value="ECO:0000314"/>
    <property type="project" value="RGD"/>
</dbReference>
<dbReference type="GO" id="GO:0017046">
    <property type="term" value="F:peptide hormone binding"/>
    <property type="evidence" value="ECO:0000314"/>
    <property type="project" value="RGD"/>
</dbReference>
<dbReference type="GO" id="GO:0032870">
    <property type="term" value="P:cellular response to hormone stimulus"/>
    <property type="evidence" value="ECO:0000318"/>
    <property type="project" value="GO_Central"/>
</dbReference>
<dbReference type="GO" id="GO:0022410">
    <property type="term" value="P:circadian sleep/wake cycle process"/>
    <property type="evidence" value="ECO:0007669"/>
    <property type="project" value="InterPro"/>
</dbReference>
<dbReference type="GO" id="GO:0007631">
    <property type="term" value="P:feeding behavior"/>
    <property type="evidence" value="ECO:0000314"/>
    <property type="project" value="RGD"/>
</dbReference>
<dbReference type="GO" id="GO:0007186">
    <property type="term" value="P:G protein-coupled receptor signaling pathway"/>
    <property type="evidence" value="ECO:0000314"/>
    <property type="project" value="RGD"/>
</dbReference>
<dbReference type="GO" id="GO:0040011">
    <property type="term" value="P:locomotion"/>
    <property type="evidence" value="ECO:0000266"/>
    <property type="project" value="RGD"/>
</dbReference>
<dbReference type="GO" id="GO:0007218">
    <property type="term" value="P:neuropeptide signaling pathway"/>
    <property type="evidence" value="ECO:0000314"/>
    <property type="project" value="RGD"/>
</dbReference>
<dbReference type="GO" id="GO:0007200">
    <property type="term" value="P:phospholipase C-activating G protein-coupled receptor signaling pathway"/>
    <property type="evidence" value="ECO:0000266"/>
    <property type="project" value="RGD"/>
</dbReference>
<dbReference type="GO" id="GO:0010840">
    <property type="term" value="P:regulation of circadian sleep/wake cycle, wakefulness"/>
    <property type="evidence" value="ECO:0000250"/>
    <property type="project" value="UniProtKB"/>
</dbReference>
<dbReference type="GO" id="GO:0051480">
    <property type="term" value="P:regulation of cytosolic calcium ion concentration"/>
    <property type="evidence" value="ECO:0000250"/>
    <property type="project" value="UniProtKB"/>
</dbReference>
<dbReference type="CDD" id="cd15208">
    <property type="entry name" value="7tmA_OXR"/>
    <property type="match status" value="1"/>
</dbReference>
<dbReference type="FunFam" id="1.20.1070.10:FF:000075">
    <property type="entry name" value="orexin receptor type 2"/>
    <property type="match status" value="1"/>
</dbReference>
<dbReference type="Gene3D" id="1.20.1070.10">
    <property type="entry name" value="Rhodopsin 7-helix transmembrane proteins"/>
    <property type="match status" value="1"/>
</dbReference>
<dbReference type="InterPro" id="IPR000276">
    <property type="entry name" value="GPCR_Rhodpsn"/>
</dbReference>
<dbReference type="InterPro" id="IPR017452">
    <property type="entry name" value="GPCR_Rhodpsn_7TM"/>
</dbReference>
<dbReference type="InterPro" id="IPR000204">
    <property type="entry name" value="Orexin_rcpt"/>
</dbReference>
<dbReference type="InterPro" id="IPR004060">
    <property type="entry name" value="Orexin_rcpt_2"/>
</dbReference>
<dbReference type="PANTHER" id="PTHR45695:SF32">
    <property type="entry name" value="G PROTEIN-COUPLED RECEPTOR 15-LIKE"/>
    <property type="match status" value="1"/>
</dbReference>
<dbReference type="PANTHER" id="PTHR45695">
    <property type="entry name" value="LEUCOKININ RECEPTOR-RELATED"/>
    <property type="match status" value="1"/>
</dbReference>
<dbReference type="Pfam" id="PF00001">
    <property type="entry name" value="7tm_1"/>
    <property type="match status" value="1"/>
</dbReference>
<dbReference type="Pfam" id="PF03827">
    <property type="entry name" value="Orexin_rec2"/>
    <property type="match status" value="1"/>
</dbReference>
<dbReference type="PRINTS" id="PR00237">
    <property type="entry name" value="GPCRRHODOPSN"/>
</dbReference>
<dbReference type="PRINTS" id="PR01522">
    <property type="entry name" value="OREXIN2R"/>
</dbReference>
<dbReference type="PRINTS" id="PR01064">
    <property type="entry name" value="OREXINR"/>
</dbReference>
<dbReference type="SMART" id="SM01381">
    <property type="entry name" value="7TM_GPCR_Srsx"/>
    <property type="match status" value="1"/>
</dbReference>
<dbReference type="SUPFAM" id="SSF81321">
    <property type="entry name" value="Family A G protein-coupled receptor-like"/>
    <property type="match status" value="1"/>
</dbReference>
<dbReference type="PROSITE" id="PS00237">
    <property type="entry name" value="G_PROTEIN_RECEP_F1_1"/>
    <property type="match status" value="1"/>
</dbReference>
<dbReference type="PROSITE" id="PS50262">
    <property type="entry name" value="G_PROTEIN_RECEP_F1_2"/>
    <property type="match status" value="1"/>
</dbReference>
<comment type="function">
    <text evidence="1">Nonselective, high-affinity receptor for both orexin-A and orexin-B neuropeptides. Triggers an increase in cytoplasmic Ca(2+) levels in response to orexin-A binding.</text>
</comment>
<comment type="subcellular location">
    <subcellularLocation>
        <location evidence="1">Cell membrane</location>
        <topology evidence="1">Multi-pass membrane protein</topology>
    </subcellularLocation>
</comment>
<comment type="tissue specificity">
    <text evidence="4">Expressed in the brain in the cerebral cortex, septal nuclei, hippocampus, medial thalamic groups, dorsal and median raphe nuclei, and many hypothalamic nuclei including the tuberomammillary nucleus, dorsomedial hypothalamus, paraventricular hypothalamic nucleus, and ventral premammillary nucleus. Not detected in the spleen, lung, liver, skeletal muscle, kidney and testis. Orexin receptor mRNA expression has also been reported in the adrenal gland, enteric nervous system, and pancreas.</text>
</comment>
<comment type="domain">
    <text evidence="1">The N-terminal region is required for orexin signaling.</text>
</comment>
<comment type="similarity">
    <text evidence="3">Belongs to the G-protein coupled receptor 1 family.</text>
</comment>
<keyword id="KW-1003">Cell membrane</keyword>
<keyword id="KW-1015">Disulfide bond</keyword>
<keyword id="KW-0297">G-protein coupled receptor</keyword>
<keyword id="KW-0325">Glycoprotein</keyword>
<keyword id="KW-0472">Membrane</keyword>
<keyword id="KW-0675">Receptor</keyword>
<keyword id="KW-1185">Reference proteome</keyword>
<keyword id="KW-0807">Transducer</keyword>
<keyword id="KW-0812">Transmembrane</keyword>
<keyword id="KW-1133">Transmembrane helix</keyword>
<protein>
    <recommendedName>
        <fullName>Orexin receptor type 2</fullName>
        <shortName>Ox-2-R</shortName>
        <shortName>Ox2-R</shortName>
        <shortName>Ox2R</shortName>
    </recommendedName>
    <alternativeName>
        <fullName>Hypocretin receptor type 2</fullName>
    </alternativeName>
</protein>
<accession>P56719</accession>
<sequence>MSSTKLEDSLPRRNWSSASELNETQEPFLNPTDYDDEEFLRYLWREYLHPKEYEWVLIAGYIIVFVVALIGNVLVCVAVWKNHHMRTVTNYFIVNLSLADVLVTITCLPATLVVDITETWFFGQSLCKVIPYLQTVSVSVSVLTLSCIALDRWYAICHPLMFKSTAKRARNSIVVIWIVSCIIMIPQAIVMERSSMLPGLANKTTLFTVCDERWGGEVYPKMYHICFFLVTYMAPLCLMVLAYLQIFRKLWCRQIPGTSSVVQRKWKQPQPVSQPRGSGQQSKARISAVAAEIKQIRARRKTARMLMVVLLVFAICYLPISILNVLKRVFGMFTHTEDRETVYAWFTFSHWLVYANSAANPIIYNFLSGKFREEFKAAFSCCLGVHRRQGDRLARGRTSTESRKSLTTQISNFDNVSKLSEHVALTSISTLPAANGAGPLQNWYLQQGVPSSLLSTWLEV</sequence>
<reference key="1">
    <citation type="journal article" date="1998" name="Cell">
        <title>Orexins and orexin receptors: a family of hypothalamic neuropeptides and G protein-coupled receptors that regulate feeding behavior.</title>
        <authorList>
            <person name="Sakurai T."/>
            <person name="Amemiya A."/>
            <person name="Ishii M."/>
            <person name="Matsuzaki I."/>
            <person name="Chemelli R.M."/>
            <person name="Tanaka H."/>
            <person name="Williams S.C."/>
            <person name="Richardson J.A."/>
            <person name="Kozlowski G.P."/>
            <person name="Wilson S."/>
            <person name="Arch J.R.S."/>
            <person name="Buckingham R.E."/>
            <person name="Haynes A.C."/>
            <person name="Carr S.A."/>
            <person name="Annan R.S."/>
            <person name="McNulty D.E."/>
            <person name="Liu W.-S."/>
            <person name="Terrett J.A."/>
            <person name="Elshourbagy N.A."/>
            <person name="Bergsma D.J."/>
            <person name="Yanagisawa M."/>
        </authorList>
    </citation>
    <scope>NUCLEOTIDE SEQUENCE [MRNA]</scope>
    <scope>TISSUE SPECIFICITY</scope>
    <source>
        <tissue>Brain</tissue>
    </source>
</reference>
<reference key="2">
    <citation type="journal article" date="2001" name="Bioessays">
        <title>Hypocretin/orexin, sleep and narcolepsy.</title>
        <authorList>
            <person name="Hungs M."/>
            <person name="Mignot E."/>
        </authorList>
    </citation>
    <scope>REVIEW</scope>
</reference>
<reference key="3">
    <citation type="journal article" date="2001" name="Annu. Rev. Neurosci.">
        <title>To eat or to sleep? Orexin in the regulation of feeding and wakefulness.</title>
        <authorList>
            <person name="Willie J.T."/>
            <person name="Chemelli R.M."/>
            <person name="Sinton C.M."/>
            <person name="Yanagisawa M."/>
        </authorList>
    </citation>
    <scope>REVIEW</scope>
</reference>
<proteinExistence type="evidence at transcript level"/>
<name>OX2R_RAT</name>
<gene>
    <name type="primary">Hcrtr2</name>
</gene>
<feature type="chain" id="PRO_0000069992" description="Orexin receptor type 2">
    <location>
        <begin position="1"/>
        <end position="460"/>
    </location>
</feature>
<feature type="topological domain" description="Extracellular" evidence="1">
    <location>
        <begin position="1"/>
        <end position="54"/>
    </location>
</feature>
<feature type="transmembrane region" description="Helical; Name=1" evidence="1">
    <location>
        <begin position="55"/>
        <end position="75"/>
    </location>
</feature>
<feature type="topological domain" description="Cytoplasmic" evidence="1">
    <location>
        <begin position="76"/>
        <end position="88"/>
    </location>
</feature>
<feature type="transmembrane region" description="Helical; Name=2" evidence="1">
    <location>
        <begin position="89"/>
        <end position="110"/>
    </location>
</feature>
<feature type="topological domain" description="Extracellular" evidence="1">
    <location>
        <begin position="111"/>
        <end position="127"/>
    </location>
</feature>
<feature type="transmembrane region" description="Helical; Name=3" evidence="1">
    <location>
        <begin position="128"/>
        <end position="150"/>
    </location>
</feature>
<feature type="topological domain" description="Cytoplasmic" evidence="1">
    <location>
        <begin position="151"/>
        <end position="170"/>
    </location>
</feature>
<feature type="transmembrane region" description="Helical; Name=4" evidence="1">
    <location>
        <begin position="171"/>
        <end position="191"/>
    </location>
</feature>
<feature type="topological domain" description="Extracellular" evidence="1">
    <location>
        <begin position="192"/>
        <end position="222"/>
    </location>
</feature>
<feature type="transmembrane region" description="Helical; Name=5" evidence="1">
    <location>
        <begin position="223"/>
        <end position="243"/>
    </location>
</feature>
<feature type="topological domain" description="Cytoplasmic" evidence="1">
    <location>
        <begin position="244"/>
        <end position="304"/>
    </location>
</feature>
<feature type="transmembrane region" description="Helical; Name=6" evidence="1">
    <location>
        <begin position="305"/>
        <end position="326"/>
    </location>
</feature>
<feature type="topological domain" description="Extracellular" evidence="1">
    <location>
        <begin position="327"/>
        <end position="342"/>
    </location>
</feature>
<feature type="transmembrane region" description="Helical; Name=7" evidence="1">
    <location>
        <begin position="343"/>
        <end position="366"/>
    </location>
</feature>
<feature type="topological domain" description="Cytoplasmic" evidence="1">
    <location>
        <begin position="367"/>
        <end position="460"/>
    </location>
</feature>
<feature type="region of interest" description="Required for response to orexin-A" evidence="1">
    <location>
        <begin position="33"/>
        <end position="49"/>
    </location>
</feature>
<feature type="site" description="Important for responses to orexin" evidence="1">
    <location>
        <position position="44"/>
    </location>
</feature>
<feature type="glycosylation site" description="N-linked (GlcNAc...) asparagine" evidence="2">
    <location>
        <position position="14"/>
    </location>
</feature>
<feature type="glycosylation site" description="N-linked (GlcNAc...) asparagine" evidence="2">
    <location>
        <position position="22"/>
    </location>
</feature>
<feature type="glycosylation site" description="N-linked (GlcNAc...) asparagine" evidence="2">
    <location>
        <position position="202"/>
    </location>
</feature>
<feature type="disulfide bond" evidence="1">
    <location>
        <begin position="127"/>
        <end position="210"/>
    </location>
</feature>